<dbReference type="EMBL" id="CP001321">
    <property type="protein sequence ID" value="ACL31715.1"/>
    <property type="molecule type" value="Genomic_DNA"/>
</dbReference>
<dbReference type="RefSeq" id="WP_005712716.1">
    <property type="nucleotide sequence ID" value="NC_011852.1"/>
</dbReference>
<dbReference type="SMR" id="B8F313"/>
<dbReference type="STRING" id="557723.HAPS_0010"/>
<dbReference type="GeneID" id="66618398"/>
<dbReference type="KEGG" id="hap:HAPS_0010"/>
<dbReference type="HOGENOM" id="CLU_030174_1_0_6"/>
<dbReference type="Proteomes" id="UP000006743">
    <property type="component" value="Chromosome"/>
</dbReference>
<dbReference type="GO" id="GO:0032153">
    <property type="term" value="C:cell division site"/>
    <property type="evidence" value="ECO:0007669"/>
    <property type="project" value="UniProtKB-UniRule"/>
</dbReference>
<dbReference type="GO" id="GO:0005886">
    <property type="term" value="C:plasma membrane"/>
    <property type="evidence" value="ECO:0007669"/>
    <property type="project" value="UniProtKB-SubCell"/>
</dbReference>
<dbReference type="GO" id="GO:0000917">
    <property type="term" value="P:division septum assembly"/>
    <property type="evidence" value="ECO:0007669"/>
    <property type="project" value="TreeGrafter"/>
</dbReference>
<dbReference type="GO" id="GO:0043093">
    <property type="term" value="P:FtsZ-dependent cytokinesis"/>
    <property type="evidence" value="ECO:0007669"/>
    <property type="project" value="UniProtKB-UniRule"/>
</dbReference>
<dbReference type="Gene3D" id="3.30.1400.10">
    <property type="entry name" value="ZipA, C-terminal FtsZ-binding domain"/>
    <property type="match status" value="1"/>
</dbReference>
<dbReference type="HAMAP" id="MF_00509">
    <property type="entry name" value="ZipA"/>
    <property type="match status" value="1"/>
</dbReference>
<dbReference type="InterPro" id="IPR011919">
    <property type="entry name" value="Cell_div_ZipA"/>
</dbReference>
<dbReference type="InterPro" id="IPR007449">
    <property type="entry name" value="ZipA_FtsZ-bd_C"/>
</dbReference>
<dbReference type="InterPro" id="IPR036765">
    <property type="entry name" value="ZipA_FtsZ-bd_C_sf"/>
</dbReference>
<dbReference type="NCBIfam" id="TIGR02205">
    <property type="entry name" value="septum_zipA"/>
    <property type="match status" value="1"/>
</dbReference>
<dbReference type="PANTHER" id="PTHR38685">
    <property type="entry name" value="CELL DIVISION PROTEIN ZIPA"/>
    <property type="match status" value="1"/>
</dbReference>
<dbReference type="PANTHER" id="PTHR38685:SF1">
    <property type="entry name" value="CELL DIVISION PROTEIN ZIPA"/>
    <property type="match status" value="1"/>
</dbReference>
<dbReference type="Pfam" id="PF04354">
    <property type="entry name" value="ZipA_C"/>
    <property type="match status" value="1"/>
</dbReference>
<dbReference type="SMART" id="SM00771">
    <property type="entry name" value="ZipA_C"/>
    <property type="match status" value="1"/>
</dbReference>
<dbReference type="SUPFAM" id="SSF64383">
    <property type="entry name" value="Cell-division protein ZipA, C-terminal domain"/>
    <property type="match status" value="1"/>
</dbReference>
<reference key="1">
    <citation type="journal article" date="2009" name="J. Bacteriol.">
        <title>Complete genome sequence of Haemophilus parasuis SH0165.</title>
        <authorList>
            <person name="Yue M."/>
            <person name="Yang F."/>
            <person name="Yang J."/>
            <person name="Bei W."/>
            <person name="Cai X."/>
            <person name="Chen L."/>
            <person name="Dong J."/>
            <person name="Zhou R."/>
            <person name="Jin M."/>
            <person name="Jin Q."/>
            <person name="Chen H."/>
        </authorList>
    </citation>
    <scope>NUCLEOTIDE SEQUENCE [LARGE SCALE GENOMIC DNA]</scope>
    <source>
        <strain>SH0165</strain>
    </source>
</reference>
<gene>
    <name evidence="1" type="primary">zipA</name>
    <name type="ordered locus">HAPS_0010</name>
</gene>
<accession>B8F313</accession>
<keyword id="KW-0131">Cell cycle</keyword>
<keyword id="KW-0132">Cell division</keyword>
<keyword id="KW-0997">Cell inner membrane</keyword>
<keyword id="KW-1003">Cell membrane</keyword>
<keyword id="KW-0472">Membrane</keyword>
<keyword id="KW-1185">Reference proteome</keyword>
<keyword id="KW-0812">Transmembrane</keyword>
<keyword id="KW-1133">Transmembrane helix</keyword>
<proteinExistence type="inferred from homology"/>
<comment type="function">
    <text evidence="1">Essential cell division protein that stabilizes the FtsZ protofilaments by cross-linking them and that serves as a cytoplasmic membrane anchor for the Z ring. Also required for the recruitment to the septal ring of downstream cell division proteins.</text>
</comment>
<comment type="subunit">
    <text evidence="1">Interacts with FtsZ via their C-terminal domains.</text>
</comment>
<comment type="subcellular location">
    <subcellularLocation>
        <location evidence="1">Cell inner membrane</location>
        <topology evidence="1">Single-pass type I membrane protein</topology>
    </subcellularLocation>
    <text evidence="1">Localizes to the Z ring in an FtsZ-dependent manner.</text>
</comment>
<comment type="similarity">
    <text evidence="1">Belongs to the ZipA family.</text>
</comment>
<organism>
    <name type="scientific">Glaesserella parasuis serovar 5 (strain SH0165)</name>
    <name type="common">Haemophilus parasuis</name>
    <dbReference type="NCBI Taxonomy" id="557723"/>
    <lineage>
        <taxon>Bacteria</taxon>
        <taxon>Pseudomonadati</taxon>
        <taxon>Pseudomonadota</taxon>
        <taxon>Gammaproteobacteria</taxon>
        <taxon>Pasteurellales</taxon>
        <taxon>Pasteurellaceae</taxon>
        <taxon>Glaesserella</taxon>
    </lineage>
</organism>
<evidence type="ECO:0000255" key="1">
    <source>
        <dbReference type="HAMAP-Rule" id="MF_00509"/>
    </source>
</evidence>
<sequence length="272" mass="30764">METHILFFILAGLLIAVLIGYSIWSARREKSRIFSNTFSTRPPSSPISNEITADIPTTLNPQGVVAQQPFNTETPADFIQSQQEVENSVKNIRISLQTQEISQPLYQETMPESPSEAYQQNQIQEQTVQVEQVETIEQTTEHNIITLYVVAPEGVQFQGNAIVQNLEMLGFHFGEYQIFHRHLDNPASPVLFSVANMMQPGVFDLARMEQFSTVGLVFFMHLPSVGNDLANLKLMIRTVESFAQSVGGFVLDEQHQIFNDESRQNYLLRVAN</sequence>
<protein>
    <recommendedName>
        <fullName evidence="1">Cell division protein ZipA</fullName>
    </recommendedName>
</protein>
<feature type="chain" id="PRO_1000200694" description="Cell division protein ZipA">
    <location>
        <begin position="1"/>
        <end position="272"/>
    </location>
</feature>
<feature type="topological domain" description="Periplasmic" evidence="1">
    <location>
        <begin position="1"/>
        <end position="4"/>
    </location>
</feature>
<feature type="transmembrane region" description="Helical" evidence="1">
    <location>
        <begin position="5"/>
        <end position="25"/>
    </location>
</feature>
<feature type="topological domain" description="Cytoplasmic" evidence="1">
    <location>
        <begin position="26"/>
        <end position="272"/>
    </location>
</feature>
<name>ZIPA_GLAP5</name>